<evidence type="ECO:0000255" key="1">
    <source>
        <dbReference type="HAMAP-Rule" id="MF_01368"/>
    </source>
</evidence>
<evidence type="ECO:0000305" key="2"/>
<keyword id="KW-0687">Ribonucleoprotein</keyword>
<keyword id="KW-0689">Ribosomal protein</keyword>
<comment type="subunit">
    <text evidence="1">Part of the 50S ribosomal subunit. Contacts protein L32.</text>
</comment>
<comment type="similarity">
    <text evidence="1">Belongs to the bacterial ribosomal protein bL17 family.</text>
</comment>
<proteinExistence type="inferred from homology"/>
<gene>
    <name evidence="1" type="primary">rplQ</name>
    <name type="ordered locus">Shal_4109</name>
</gene>
<name>RL17_SHEHH</name>
<feature type="chain" id="PRO_1000087193" description="Large ribosomal subunit protein bL17">
    <location>
        <begin position="1"/>
        <end position="130"/>
    </location>
</feature>
<reference key="1">
    <citation type="submission" date="2008-01" db="EMBL/GenBank/DDBJ databases">
        <title>Complete sequence of Shewanella halifaxensis HAW-EB4.</title>
        <authorList>
            <consortium name="US DOE Joint Genome Institute"/>
            <person name="Copeland A."/>
            <person name="Lucas S."/>
            <person name="Lapidus A."/>
            <person name="Glavina del Rio T."/>
            <person name="Dalin E."/>
            <person name="Tice H."/>
            <person name="Bruce D."/>
            <person name="Goodwin L."/>
            <person name="Pitluck S."/>
            <person name="Sims D."/>
            <person name="Brettin T."/>
            <person name="Detter J.C."/>
            <person name="Han C."/>
            <person name="Kuske C.R."/>
            <person name="Schmutz J."/>
            <person name="Larimer F."/>
            <person name="Land M."/>
            <person name="Hauser L."/>
            <person name="Kyrpides N."/>
            <person name="Kim E."/>
            <person name="Zhao J.-S."/>
            <person name="Richardson P."/>
        </authorList>
    </citation>
    <scope>NUCLEOTIDE SEQUENCE [LARGE SCALE GENOMIC DNA]</scope>
    <source>
        <strain>HAW-EB4</strain>
    </source>
</reference>
<sequence>MRHRKSGRQLNRNSSHRQAMFRNMACSIVRHEVIKTTVAKAKELRRVVEPLITLAKSDSVANRRLAFARTRDAEVVGKLFTELGPRFQDRPGGYTRILKCGLRTGDKAPMAYIELVGRPEAAEAVEDTAE</sequence>
<protein>
    <recommendedName>
        <fullName evidence="1">Large ribosomal subunit protein bL17</fullName>
    </recommendedName>
    <alternativeName>
        <fullName evidence="2">50S ribosomal protein L17</fullName>
    </alternativeName>
</protein>
<organism>
    <name type="scientific">Shewanella halifaxensis (strain HAW-EB4)</name>
    <dbReference type="NCBI Taxonomy" id="458817"/>
    <lineage>
        <taxon>Bacteria</taxon>
        <taxon>Pseudomonadati</taxon>
        <taxon>Pseudomonadota</taxon>
        <taxon>Gammaproteobacteria</taxon>
        <taxon>Alteromonadales</taxon>
        <taxon>Shewanellaceae</taxon>
        <taxon>Shewanella</taxon>
    </lineage>
</organism>
<dbReference type="EMBL" id="CP000931">
    <property type="protein sequence ID" value="ABZ78649.1"/>
    <property type="molecule type" value="Genomic_DNA"/>
</dbReference>
<dbReference type="RefSeq" id="WP_012279166.1">
    <property type="nucleotide sequence ID" value="NC_010334.1"/>
</dbReference>
<dbReference type="SMR" id="B0TLY7"/>
<dbReference type="STRING" id="458817.Shal_4109"/>
<dbReference type="KEGG" id="shl:Shal_4109"/>
<dbReference type="eggNOG" id="COG0203">
    <property type="taxonomic scope" value="Bacteria"/>
</dbReference>
<dbReference type="HOGENOM" id="CLU_074407_2_0_6"/>
<dbReference type="OrthoDB" id="9809073at2"/>
<dbReference type="Proteomes" id="UP000001317">
    <property type="component" value="Chromosome"/>
</dbReference>
<dbReference type="GO" id="GO:0022625">
    <property type="term" value="C:cytosolic large ribosomal subunit"/>
    <property type="evidence" value="ECO:0007669"/>
    <property type="project" value="TreeGrafter"/>
</dbReference>
<dbReference type="GO" id="GO:0003735">
    <property type="term" value="F:structural constituent of ribosome"/>
    <property type="evidence" value="ECO:0007669"/>
    <property type="project" value="InterPro"/>
</dbReference>
<dbReference type="GO" id="GO:0006412">
    <property type="term" value="P:translation"/>
    <property type="evidence" value="ECO:0007669"/>
    <property type="project" value="UniProtKB-UniRule"/>
</dbReference>
<dbReference type="FunFam" id="3.90.1030.10:FF:000001">
    <property type="entry name" value="50S ribosomal protein L17"/>
    <property type="match status" value="1"/>
</dbReference>
<dbReference type="Gene3D" id="3.90.1030.10">
    <property type="entry name" value="Ribosomal protein L17"/>
    <property type="match status" value="1"/>
</dbReference>
<dbReference type="HAMAP" id="MF_01368">
    <property type="entry name" value="Ribosomal_bL17"/>
    <property type="match status" value="1"/>
</dbReference>
<dbReference type="InterPro" id="IPR000456">
    <property type="entry name" value="Ribosomal_bL17"/>
</dbReference>
<dbReference type="InterPro" id="IPR047859">
    <property type="entry name" value="Ribosomal_bL17_CS"/>
</dbReference>
<dbReference type="InterPro" id="IPR036373">
    <property type="entry name" value="Ribosomal_bL17_sf"/>
</dbReference>
<dbReference type="NCBIfam" id="TIGR00059">
    <property type="entry name" value="L17"/>
    <property type="match status" value="1"/>
</dbReference>
<dbReference type="PANTHER" id="PTHR14413:SF16">
    <property type="entry name" value="LARGE RIBOSOMAL SUBUNIT PROTEIN BL17M"/>
    <property type="match status" value="1"/>
</dbReference>
<dbReference type="PANTHER" id="PTHR14413">
    <property type="entry name" value="RIBOSOMAL PROTEIN L17"/>
    <property type="match status" value="1"/>
</dbReference>
<dbReference type="Pfam" id="PF01196">
    <property type="entry name" value="Ribosomal_L17"/>
    <property type="match status" value="1"/>
</dbReference>
<dbReference type="SUPFAM" id="SSF64263">
    <property type="entry name" value="Prokaryotic ribosomal protein L17"/>
    <property type="match status" value="1"/>
</dbReference>
<dbReference type="PROSITE" id="PS01167">
    <property type="entry name" value="RIBOSOMAL_L17"/>
    <property type="match status" value="1"/>
</dbReference>
<accession>B0TLY7</accession>